<accession>C5MA32</accession>
<keyword id="KW-0325">Glycoprotein</keyword>
<keyword id="KW-0472">Membrane</keyword>
<keyword id="KW-1185">Reference proteome</keyword>
<keyword id="KW-0732">Signal</keyword>
<keyword id="KW-0812">Transmembrane</keyword>
<keyword id="KW-1133">Transmembrane helix</keyword>
<comment type="function">
    <text evidence="1">May be involved in telomere capping.</text>
</comment>
<comment type="subcellular location">
    <subcellularLocation>
        <location evidence="4">Membrane</location>
        <topology evidence="4">Single-pass type I membrane protein</topology>
    </subcellularLocation>
</comment>
<comment type="similarity">
    <text evidence="4">Belongs to the MTC6 family.</text>
</comment>
<reference key="1">
    <citation type="journal article" date="2009" name="Nature">
        <title>Evolution of pathogenicity and sexual reproduction in eight Candida genomes.</title>
        <authorList>
            <person name="Butler G."/>
            <person name="Rasmussen M.D."/>
            <person name="Lin M.F."/>
            <person name="Santos M.A.S."/>
            <person name="Sakthikumar S."/>
            <person name="Munro C.A."/>
            <person name="Rheinbay E."/>
            <person name="Grabherr M."/>
            <person name="Forche A."/>
            <person name="Reedy J.L."/>
            <person name="Agrafioti I."/>
            <person name="Arnaud M.B."/>
            <person name="Bates S."/>
            <person name="Brown A.J.P."/>
            <person name="Brunke S."/>
            <person name="Costanzo M.C."/>
            <person name="Fitzpatrick D.A."/>
            <person name="de Groot P.W.J."/>
            <person name="Harris D."/>
            <person name="Hoyer L.L."/>
            <person name="Hube B."/>
            <person name="Klis F.M."/>
            <person name="Kodira C."/>
            <person name="Lennard N."/>
            <person name="Logue M.E."/>
            <person name="Martin R."/>
            <person name="Neiman A.M."/>
            <person name="Nikolaou E."/>
            <person name="Quail M.A."/>
            <person name="Quinn J."/>
            <person name="Santos M.C."/>
            <person name="Schmitzberger F.F."/>
            <person name="Sherlock G."/>
            <person name="Shah P."/>
            <person name="Silverstein K.A.T."/>
            <person name="Skrzypek M.S."/>
            <person name="Soll D."/>
            <person name="Staggs R."/>
            <person name="Stansfield I."/>
            <person name="Stumpf M.P.H."/>
            <person name="Sudbery P.E."/>
            <person name="Srikantha T."/>
            <person name="Zeng Q."/>
            <person name="Berman J."/>
            <person name="Berriman M."/>
            <person name="Heitman J."/>
            <person name="Gow N.A.R."/>
            <person name="Lorenz M.C."/>
            <person name="Birren B.W."/>
            <person name="Kellis M."/>
            <person name="Cuomo C.A."/>
        </authorList>
    </citation>
    <scope>NUCLEOTIDE SEQUENCE [LARGE SCALE GENOMIC DNA]</scope>
    <source>
        <strain>ATCC MYA-3404 / T1</strain>
    </source>
</reference>
<evidence type="ECO:0000250" key="1"/>
<evidence type="ECO:0000255" key="2"/>
<evidence type="ECO:0000256" key="3">
    <source>
        <dbReference type="SAM" id="MobiDB-lite"/>
    </source>
</evidence>
<evidence type="ECO:0000305" key="4"/>
<feature type="signal peptide" evidence="2">
    <location>
        <begin position="1"/>
        <end position="21"/>
    </location>
</feature>
<feature type="chain" id="PRO_0000407776" description="Maintenance of telomere capping protein 6">
    <location>
        <begin position="22"/>
        <end position="601"/>
    </location>
</feature>
<feature type="topological domain" description="Extracellular" evidence="2">
    <location>
        <begin position="22"/>
        <end position="549"/>
    </location>
</feature>
<feature type="transmembrane region" description="Helical" evidence="2">
    <location>
        <begin position="550"/>
        <end position="570"/>
    </location>
</feature>
<feature type="topological domain" description="Cytoplasmic" evidence="2">
    <location>
        <begin position="571"/>
        <end position="601"/>
    </location>
</feature>
<feature type="region of interest" description="Disordered" evidence="3">
    <location>
        <begin position="405"/>
        <end position="425"/>
    </location>
</feature>
<feature type="compositionally biased region" description="Low complexity" evidence="3">
    <location>
        <begin position="413"/>
        <end position="425"/>
    </location>
</feature>
<feature type="glycosylation site" description="N-linked (GlcNAc...) asparagine" evidence="2">
    <location>
        <position position="29"/>
    </location>
</feature>
<feature type="glycosylation site" description="N-linked (GlcNAc...) asparagine" evidence="2">
    <location>
        <position position="109"/>
    </location>
</feature>
<feature type="glycosylation site" description="N-linked (GlcNAc...) asparagine" evidence="2">
    <location>
        <position position="173"/>
    </location>
</feature>
<feature type="glycosylation site" description="N-linked (GlcNAc...) asparagine" evidence="2">
    <location>
        <position position="194"/>
    </location>
</feature>
<feature type="glycosylation site" description="N-linked (GlcNAc...) asparagine" evidence="2">
    <location>
        <position position="198"/>
    </location>
</feature>
<feature type="glycosylation site" description="N-linked (GlcNAc...) asparagine" evidence="2">
    <location>
        <position position="234"/>
    </location>
</feature>
<feature type="glycosylation site" description="N-linked (GlcNAc...) asparagine" evidence="2">
    <location>
        <position position="244"/>
    </location>
</feature>
<feature type="glycosylation site" description="N-linked (GlcNAc...) asparagine" evidence="2">
    <location>
        <position position="275"/>
    </location>
</feature>
<feature type="glycosylation site" description="N-linked (GlcNAc...) asparagine" evidence="2">
    <location>
        <position position="302"/>
    </location>
</feature>
<feature type="glycosylation site" description="N-linked (GlcNAc...) asparagine" evidence="2">
    <location>
        <position position="320"/>
    </location>
</feature>
<feature type="glycosylation site" description="N-linked (GlcNAc...) asparagine" evidence="2">
    <location>
        <position position="331"/>
    </location>
</feature>
<feature type="glycosylation site" description="N-linked (GlcNAc...) asparagine" evidence="2">
    <location>
        <position position="367"/>
    </location>
</feature>
<feature type="glycosylation site" description="N-linked (GlcNAc...) asparagine" evidence="2">
    <location>
        <position position="375"/>
    </location>
</feature>
<feature type="glycosylation site" description="N-linked (GlcNAc...) asparagine" evidence="2">
    <location>
        <position position="405"/>
    </location>
</feature>
<feature type="glycosylation site" description="N-linked (GlcNAc...) asparagine" evidence="2">
    <location>
        <position position="414"/>
    </location>
</feature>
<feature type="glycosylation site" description="N-linked (GlcNAc...) asparagine" evidence="2">
    <location>
        <position position="420"/>
    </location>
</feature>
<feature type="glycosylation site" description="N-linked (GlcNAc...) asparagine" evidence="2">
    <location>
        <position position="457"/>
    </location>
</feature>
<sequence length="601" mass="67581">MKPVYCFSILALLQIFTVVVSESNWPTLNFTLEIASRAQRDISKLLPISQITTVGISLSSIFRNSGYTVDALSPLYDLLNGGNEAIMIDLYWNEFTSQWQLCPAPFPSNTTYNMNDVVDLSWENNDYQCQPGLSTENIMGIINSYIRDTNTNIGANFLRILFNLKSIHYENSNRTIDLQNIYKPSILNPVNIGNDTLNDTIASLGSYIFTPTVLSQYQSDASHVEKASSGSSINSTQAISYFYNQSNIIVPSLDTVLLSEYKRVSAHISSNELVNSSRVYQFTSYDTDLIFFNDVVPLVVENTTTGVAGRYCNELFNAYNSTGVDIETFNNLSLTTRLRFIVDSDENPFTVDTLSKFVRCGYSAIFNGTYDVGVNSSSLDFSDEVDEFIPYGFWSWSPGQPVDLNDTNSDSINNASMSSNNTDDSNGNSLAFKCVVLTETGWSVANCYDRHVIACQNSTSRNNWVLQETNKRNYFEIDKGDCPEGYTFSIPRSSTEMLSLQATVKQRNVPYPIWLDLNDITVPNCFVSGGPYAQCPYQRTITTNKFVRMIAPSFAVGVVVLVLILIENIFRTNPIQTNRKRYWKKAIQEYYNKNDFEGVPS</sequence>
<proteinExistence type="inferred from homology"/>
<dbReference type="EMBL" id="GG692397">
    <property type="protein sequence ID" value="EER33526.1"/>
    <property type="molecule type" value="Genomic_DNA"/>
</dbReference>
<dbReference type="RefSeq" id="XP_002548047.1">
    <property type="nucleotide sequence ID" value="XM_002548001.1"/>
</dbReference>
<dbReference type="STRING" id="294747.C5MA32"/>
<dbReference type="GlyCosmos" id="C5MA32">
    <property type="glycosylation" value="17 sites, No reported glycans"/>
</dbReference>
<dbReference type="EnsemblFungi" id="CTRG_02344-t43_1">
    <property type="protein sequence ID" value="CTRG_02344-t43_1-p1"/>
    <property type="gene ID" value="CTRG_02344"/>
</dbReference>
<dbReference type="GeneID" id="8301785"/>
<dbReference type="KEGG" id="ctp:CTRG_02344"/>
<dbReference type="VEuPathDB" id="FungiDB:CTRG_02344"/>
<dbReference type="eggNOG" id="ENOG502QVFP">
    <property type="taxonomic scope" value="Eukaryota"/>
</dbReference>
<dbReference type="HOGENOM" id="CLU_033723_0_0_1"/>
<dbReference type="OrthoDB" id="5573651at2759"/>
<dbReference type="Proteomes" id="UP000002037">
    <property type="component" value="Unassembled WGS sequence"/>
</dbReference>
<dbReference type="GO" id="GO:0016020">
    <property type="term" value="C:membrane"/>
    <property type="evidence" value="ECO:0007669"/>
    <property type="project" value="UniProtKB-SubCell"/>
</dbReference>
<dbReference type="InterPro" id="IPR051008">
    <property type="entry name" value="Telomere_Capping_Maintenance"/>
</dbReference>
<dbReference type="PANTHER" id="PTHR35518:SF2">
    <property type="entry name" value="MAINTENANCE OF TELOMERE CAPPING PROTEIN 6"/>
    <property type="match status" value="1"/>
</dbReference>
<dbReference type="PANTHER" id="PTHR35518">
    <property type="entry name" value="MAINTENANCE OF TELOMOERE CAPPING"/>
    <property type="match status" value="1"/>
</dbReference>
<dbReference type="Pfam" id="PF25506">
    <property type="entry name" value="TIM-barrel_MTC6"/>
    <property type="match status" value="1"/>
</dbReference>
<gene>
    <name type="primary">MTC6</name>
    <name type="ORF">CTRG_02344</name>
</gene>
<protein>
    <recommendedName>
        <fullName>Maintenance of telomere capping protein 6</fullName>
    </recommendedName>
</protein>
<name>MTC6_CANTT</name>
<organism>
    <name type="scientific">Candida tropicalis (strain ATCC MYA-3404 / T1)</name>
    <name type="common">Yeast</name>
    <dbReference type="NCBI Taxonomy" id="294747"/>
    <lineage>
        <taxon>Eukaryota</taxon>
        <taxon>Fungi</taxon>
        <taxon>Dikarya</taxon>
        <taxon>Ascomycota</taxon>
        <taxon>Saccharomycotina</taxon>
        <taxon>Pichiomycetes</taxon>
        <taxon>Debaryomycetaceae</taxon>
        <taxon>Candida/Lodderomyces clade</taxon>
        <taxon>Candida</taxon>
    </lineage>
</organism>